<name>PLPP1_PIG</name>
<evidence type="ECO:0000250" key="1">
    <source>
        <dbReference type="UniProtKB" id="O08564"/>
    </source>
</evidence>
<evidence type="ECO:0000250" key="2">
    <source>
        <dbReference type="UniProtKB" id="O14494"/>
    </source>
</evidence>
<evidence type="ECO:0000250" key="3">
    <source>
        <dbReference type="UniProtKB" id="O34349"/>
    </source>
</evidence>
<evidence type="ECO:0000250" key="4">
    <source>
        <dbReference type="UniProtKB" id="O88956"/>
    </source>
</evidence>
<evidence type="ECO:0000250" key="5">
    <source>
        <dbReference type="UniProtKB" id="Q61469"/>
    </source>
</evidence>
<evidence type="ECO:0000255" key="6"/>
<evidence type="ECO:0000256" key="7">
    <source>
        <dbReference type="SAM" id="MobiDB-lite"/>
    </source>
</evidence>
<evidence type="ECO:0000269" key="8">
    <source>
    </source>
</evidence>
<evidence type="ECO:0000269" key="9">
    <source>
    </source>
</evidence>
<evidence type="ECO:0000269" key="10">
    <source ref="1"/>
</evidence>
<evidence type="ECO:0000305" key="11"/>
<evidence type="ECO:0000305" key="12">
    <source>
    </source>
</evidence>
<feature type="chain" id="PRO_0000220907" description="Phospholipid phosphatase 1">
    <location>
        <begin position="1"/>
        <end position="285"/>
    </location>
</feature>
<feature type="topological domain" description="Cytoplasmic" evidence="5">
    <location>
        <begin position="1"/>
        <end position="6"/>
    </location>
</feature>
<feature type="transmembrane region" description="Helical" evidence="6">
    <location>
        <begin position="7"/>
        <end position="27"/>
    </location>
</feature>
<feature type="topological domain" description="Extracellular" evidence="5">
    <location>
        <begin position="28"/>
        <end position="53"/>
    </location>
</feature>
<feature type="transmembrane region" description="Helical" evidence="6">
    <location>
        <begin position="54"/>
        <end position="74"/>
    </location>
</feature>
<feature type="topological domain" description="Cytoplasmic" evidence="5">
    <location>
        <begin position="75"/>
        <end position="94"/>
    </location>
</feature>
<feature type="transmembrane region" description="Helical" evidence="6">
    <location>
        <begin position="95"/>
        <end position="115"/>
    </location>
</feature>
<feature type="topological domain" description="Extracellular" evidence="5">
    <location>
        <begin position="116"/>
        <end position="164"/>
    </location>
</feature>
<feature type="transmembrane region" description="Helical" evidence="6">
    <location>
        <begin position="165"/>
        <end position="185"/>
    </location>
</feature>
<feature type="topological domain" description="Cytoplasmic" evidence="5">
    <location>
        <begin position="186"/>
        <end position="196"/>
    </location>
</feature>
<feature type="transmembrane region" description="Helical" evidence="6">
    <location>
        <begin position="197"/>
        <end position="216"/>
    </location>
</feature>
<feature type="topological domain" description="Extracellular" evidence="5">
    <location>
        <begin position="217"/>
        <end position="229"/>
    </location>
</feature>
<feature type="transmembrane region" description="Helical" evidence="6">
    <location>
        <begin position="230"/>
        <end position="250"/>
    </location>
</feature>
<feature type="topological domain" description="Cytoplasmic" evidence="5">
    <location>
        <begin position="251"/>
        <end position="285"/>
    </location>
</feature>
<feature type="region of interest" description="Phosphatase sequence motif I" evidence="3">
    <location>
        <begin position="120"/>
        <end position="128"/>
    </location>
</feature>
<feature type="region of interest" description="Phosphatase sequence motif II" evidence="3">
    <location>
        <begin position="168"/>
        <end position="171"/>
    </location>
</feature>
<feature type="region of interest" description="Phosphatase sequence motif III" evidence="3">
    <location>
        <begin position="216"/>
        <end position="227"/>
    </location>
</feature>
<feature type="region of interest" description="Disordered" evidence="7">
    <location>
        <begin position="257"/>
        <end position="285"/>
    </location>
</feature>
<feature type="short sequence motif" description="PDZ-binding; involved in localization to the apical cell membrane" evidence="2">
    <location>
        <begin position="5"/>
        <end position="7"/>
    </location>
</feature>
<feature type="compositionally biased region" description="Basic and acidic residues" evidence="7">
    <location>
        <begin position="257"/>
        <end position="269"/>
    </location>
</feature>
<feature type="compositionally biased region" description="Polar residues" evidence="7">
    <location>
        <begin position="270"/>
        <end position="285"/>
    </location>
</feature>
<feature type="active site" description="Proton donors" evidence="3">
    <location>
        <position position="171"/>
    </location>
</feature>
<feature type="active site" description="Nucleophile" evidence="3">
    <location>
        <position position="223"/>
    </location>
</feature>
<feature type="site" description="Stabilizes the active site histidine for nucleophilic attack" evidence="3">
    <location>
        <position position="227"/>
    </location>
</feature>
<feature type="glycosylation site" description="N-linked (GlcNAc...) asparagine" evidence="6">
    <location>
        <position position="142"/>
    </location>
</feature>
<gene>
    <name evidence="2" type="primary">PLPP1</name>
    <name type="synonym">LPP1</name>
    <name type="synonym">PPAP2A</name>
</gene>
<reference key="1">
    <citation type="submission" date="2009-11" db="EMBL/GenBank/DDBJ databases">
        <authorList>
            <consortium name="Porcine genome sequencing project"/>
        </authorList>
    </citation>
    <scope>NUCLEOTIDE SEQUENCE [LARGE SCALE GENOMIC DNA]</scope>
    <source>
        <strain>Duroc</strain>
    </source>
</reference>
<reference key="2">
    <citation type="journal article" date="1996" name="J. Biol. Chem.">
        <title>Identification and cDNA cloning of 35-kDa phosphatidic acid phosphatase (type 2) bound to plasma membranes.</title>
        <authorList>
            <person name="Kai M."/>
            <person name="Wada I."/>
            <person name="Imai S."/>
            <person name="Sakane F."/>
            <person name="Kanoh H."/>
        </authorList>
    </citation>
    <scope>PARTIAL PROTEIN SEQUENCE</scope>
    <scope>FUNCTION</scope>
    <scope>CATALYTIC ACTIVITY</scope>
    <scope>PATHWAY</scope>
    <scope>SUBCELLULAR LOCATION</scope>
    <scope>GLYCOSYLATION</scope>
</reference>
<reference key="3">
    <citation type="journal article" date="1992" name="J. Biol. Chem.">
        <title>Purification and properties of phosphatidic acid phosphatase from porcine thymus membranes.</title>
        <authorList>
            <person name="Kanoh H."/>
            <person name="Imai S."/>
            <person name="Yamada K."/>
            <person name="Sakane F."/>
        </authorList>
    </citation>
    <scope>FUNCTION</scope>
    <scope>CATALYTIC ACTIVITY</scope>
    <scope>ACTIVITY REGULATION</scope>
    <scope>BIOPHYSICOCHEMICAL PROPERTIES</scope>
    <scope>PATHWAY</scope>
    <source>
        <tissue>Thymus</tissue>
    </source>
</reference>
<accession>P60588</accession>
<accession>A0A286ZIK9</accession>
<comment type="function">
    <text evidence="1 2 8 9 10">Magnesium-independent phospholipid phosphatase of the plasma membrane that catalyzes the dephosphorylation of a variety of glycerolipid and sphingolipid phosphate esters including phosphatidate/PA, lysophosphatidate/LPA, diacylglycerol pyrophosphate/DGPP, sphingosine 1-phosphate/S1P and ceramide 1-phosphate/C1P (PubMed:1334090, PubMed:8702556, Ref.1). Also acts on N-oleoyl ethanolamine phosphate/N-(9Z-octadecenoyl)-ethanolamine phosphate, a potential physiological compound (By similarity). Through its extracellular phosphatase activity allows both the hydrolysis and the cellular uptake of these bioactive lipid mediators from the milieu, regulating signal transduction in different cellular processes (By similarity). It is for instance essential for the extracellular hydrolysis of S1P and subsequent conversion into intracellular S1P (By similarity). Involved in the regulation of inflammation, platelets activation, cell proliferation and migration among other processes (By similarity). May also have an intracellular activity to regulate phospholipid-mediated signaling pathways (By similarity).</text>
</comment>
<comment type="catalytic activity">
    <reaction evidence="8 9">
        <text>a 1,2-diacyl-sn-glycero-3-phosphate + H2O = a 1,2-diacyl-sn-glycerol + phosphate</text>
        <dbReference type="Rhea" id="RHEA:27429"/>
        <dbReference type="ChEBI" id="CHEBI:15377"/>
        <dbReference type="ChEBI" id="CHEBI:17815"/>
        <dbReference type="ChEBI" id="CHEBI:43474"/>
        <dbReference type="ChEBI" id="CHEBI:58608"/>
        <dbReference type="EC" id="3.1.3.4"/>
    </reaction>
    <physiologicalReaction direction="left-to-right" evidence="12">
        <dbReference type="Rhea" id="RHEA:27430"/>
    </physiologicalReaction>
</comment>
<comment type="catalytic activity">
    <reaction evidence="2">
        <text>1,2-dihexadecanoyl-sn-glycero-3-phosphate + H2O = 1,2-dihexadecanoyl-sn-glycerol + phosphate</text>
        <dbReference type="Rhea" id="RHEA:43236"/>
        <dbReference type="ChEBI" id="CHEBI:15377"/>
        <dbReference type="ChEBI" id="CHEBI:43474"/>
        <dbReference type="ChEBI" id="CHEBI:72859"/>
        <dbReference type="ChEBI" id="CHEBI:82929"/>
    </reaction>
    <physiologicalReaction direction="left-to-right" evidence="2">
        <dbReference type="Rhea" id="RHEA:43237"/>
    </physiologicalReaction>
</comment>
<comment type="catalytic activity">
    <reaction evidence="8 9">
        <text>1,2-di-(9Z-octadecenoyl)-sn-glycero-3-phosphate + H2O = 1,2-di-(9Z-octadecenoyl)-sn-glycerol + phosphate</text>
        <dbReference type="Rhea" id="RHEA:43244"/>
        <dbReference type="ChEBI" id="CHEBI:15377"/>
        <dbReference type="ChEBI" id="CHEBI:43474"/>
        <dbReference type="ChEBI" id="CHEBI:52333"/>
        <dbReference type="ChEBI" id="CHEBI:74546"/>
    </reaction>
    <physiologicalReaction direction="left-to-right" evidence="12">
        <dbReference type="Rhea" id="RHEA:43245"/>
    </physiologicalReaction>
</comment>
<comment type="catalytic activity">
    <reaction evidence="2">
        <text>a monoacyl-sn-glycero-3-phosphate + H2O = a monoacylglycerol + phosphate</text>
        <dbReference type="Rhea" id="RHEA:46736"/>
        <dbReference type="ChEBI" id="CHEBI:15377"/>
        <dbReference type="ChEBI" id="CHEBI:17408"/>
        <dbReference type="ChEBI" id="CHEBI:43474"/>
        <dbReference type="ChEBI" id="CHEBI:77589"/>
    </reaction>
    <physiologicalReaction direction="left-to-right" evidence="2">
        <dbReference type="Rhea" id="RHEA:46737"/>
    </physiologicalReaction>
</comment>
<comment type="catalytic activity">
    <reaction evidence="2">
        <text>(9Z)-octadecenoyl-sn-glycero-3-phosphate + H2O = (9Z-octadecenoyl)-glycerol + phosphate</text>
        <dbReference type="Rhea" id="RHEA:50884"/>
        <dbReference type="ChEBI" id="CHEBI:15377"/>
        <dbReference type="ChEBI" id="CHEBI:43474"/>
        <dbReference type="ChEBI" id="CHEBI:75937"/>
        <dbReference type="ChEBI" id="CHEBI:84973"/>
    </reaction>
    <physiologicalReaction direction="left-to-right" evidence="2">
        <dbReference type="Rhea" id="RHEA:50885"/>
    </physiologicalReaction>
</comment>
<comment type="catalytic activity">
    <reaction evidence="5">
        <text>a 1-acyl-sn-glycero-3-phosphate + H2O = a 1-acyl-sn-glycerol + phosphate</text>
        <dbReference type="Rhea" id="RHEA:33155"/>
        <dbReference type="ChEBI" id="CHEBI:15377"/>
        <dbReference type="ChEBI" id="CHEBI:43474"/>
        <dbReference type="ChEBI" id="CHEBI:57970"/>
        <dbReference type="ChEBI" id="CHEBI:64683"/>
        <dbReference type="EC" id="3.1.3.106"/>
    </reaction>
    <physiologicalReaction direction="left-to-right" evidence="5">
        <dbReference type="Rhea" id="RHEA:33156"/>
    </physiologicalReaction>
</comment>
<comment type="catalytic activity">
    <reaction evidence="5">
        <text>1-(9Z-octadecenoyl)-sn-glycero-3-phosphate + H2O = 1-(9Z-octadecenoyl)-sn-glycerol + phosphate</text>
        <dbReference type="Rhea" id="RHEA:39835"/>
        <dbReference type="ChEBI" id="CHEBI:15377"/>
        <dbReference type="ChEBI" id="CHEBI:43474"/>
        <dbReference type="ChEBI" id="CHEBI:74544"/>
        <dbReference type="ChEBI" id="CHEBI:75757"/>
    </reaction>
    <physiologicalReaction direction="left-to-right" evidence="5">
        <dbReference type="Rhea" id="RHEA:39836"/>
    </physiologicalReaction>
</comment>
<comment type="catalytic activity">
    <reaction evidence="5">
        <text>a 1,2-diacyl-sn-glycerol 3-diphosphate + H2O = a 1,2-diacyl-sn-glycero-3-phosphate + phosphate + H(+)</text>
        <dbReference type="Rhea" id="RHEA:27449"/>
        <dbReference type="ChEBI" id="CHEBI:15377"/>
        <dbReference type="ChEBI" id="CHEBI:15378"/>
        <dbReference type="ChEBI" id="CHEBI:43474"/>
        <dbReference type="ChEBI" id="CHEBI:58608"/>
        <dbReference type="ChEBI" id="CHEBI:59996"/>
        <dbReference type="EC" id="3.6.1.75"/>
    </reaction>
    <physiologicalReaction direction="left-to-right" evidence="5">
        <dbReference type="Rhea" id="RHEA:27450"/>
    </physiologicalReaction>
</comment>
<comment type="catalytic activity">
    <reaction evidence="2">
        <text>sphing-4-enine 1-phosphate + H2O = sphing-4-enine + phosphate</text>
        <dbReference type="Rhea" id="RHEA:27518"/>
        <dbReference type="ChEBI" id="CHEBI:15377"/>
        <dbReference type="ChEBI" id="CHEBI:43474"/>
        <dbReference type="ChEBI" id="CHEBI:57756"/>
        <dbReference type="ChEBI" id="CHEBI:60119"/>
    </reaction>
    <physiologicalReaction direction="left-to-right" evidence="2">
        <dbReference type="Rhea" id="RHEA:27519"/>
    </physiologicalReaction>
</comment>
<comment type="catalytic activity">
    <reaction evidence="2">
        <text>an N-acylsphing-4-enine 1-phosphate + H2O = an N-acylsphing-4-enine + phosphate</text>
        <dbReference type="Rhea" id="RHEA:33743"/>
        <dbReference type="ChEBI" id="CHEBI:15377"/>
        <dbReference type="ChEBI" id="CHEBI:43474"/>
        <dbReference type="ChEBI" id="CHEBI:52639"/>
        <dbReference type="ChEBI" id="CHEBI:57674"/>
    </reaction>
    <physiologicalReaction direction="left-to-right" evidence="2">
        <dbReference type="Rhea" id="RHEA:33744"/>
    </physiologicalReaction>
</comment>
<comment type="catalytic activity">
    <reaction evidence="2">
        <text>N-(octanoyl)-sphing-4-enine-1-phosphate + H2O = N-octanoylsphing-4-enine + phosphate</text>
        <dbReference type="Rhea" id="RHEA:62040"/>
        <dbReference type="ChEBI" id="CHEBI:15377"/>
        <dbReference type="ChEBI" id="CHEBI:43474"/>
        <dbReference type="ChEBI" id="CHEBI:45815"/>
        <dbReference type="ChEBI" id="CHEBI:85376"/>
    </reaction>
    <physiologicalReaction direction="left-to-right" evidence="2">
        <dbReference type="Rhea" id="RHEA:62041"/>
    </physiologicalReaction>
</comment>
<comment type="catalytic activity">
    <reaction evidence="2">
        <text>N-(9Z-octadecenoyl)-ethanolamine phosphate + H2O = N-(9Z-octadecenoyl) ethanolamine + phosphate</text>
        <dbReference type="Rhea" id="RHEA:62160"/>
        <dbReference type="ChEBI" id="CHEBI:15377"/>
        <dbReference type="ChEBI" id="CHEBI:43474"/>
        <dbReference type="ChEBI" id="CHEBI:71466"/>
        <dbReference type="ChEBI" id="CHEBI:145465"/>
    </reaction>
    <physiologicalReaction direction="left-to-right" evidence="2">
        <dbReference type="Rhea" id="RHEA:62161"/>
    </physiologicalReaction>
</comment>
<comment type="catalytic activity">
    <reaction evidence="1">
        <text>1-hexadecanoyl-2-(9Z-octadecenoyl)-sn-glycero-3-phosphate + H2O = 1-hexadecanoyl-2-(9Z-octadecenoyl)-sn-glycerol + phosphate</text>
        <dbReference type="Rhea" id="RHEA:41255"/>
        <dbReference type="ChEBI" id="CHEBI:15377"/>
        <dbReference type="ChEBI" id="CHEBI:43474"/>
        <dbReference type="ChEBI" id="CHEBI:64839"/>
        <dbReference type="ChEBI" id="CHEBI:75466"/>
    </reaction>
    <physiologicalReaction direction="left-to-right" evidence="1">
        <dbReference type="Rhea" id="RHEA:41256"/>
    </physiologicalReaction>
</comment>
<comment type="activity regulation">
    <text evidence="8">Magnesium-independent phospholipid phosphatase (PubMed:1334090). Insensitive to N-ethylmaleimide (PubMed:1334090).</text>
</comment>
<comment type="biophysicochemical properties">
    <phDependence>
        <text evidence="8">Optimum pH is 7-7.4 with 1,2-di-(9Z-octadecenoyl)-sn-glycero-3-phosphate as substrate.</text>
    </phDependence>
</comment>
<comment type="pathway">
    <text evidence="8 9">Lipid metabolism; phospholipid metabolism.</text>
</comment>
<comment type="subunit">
    <text evidence="4 5">Forms functional homodimers and homooligomers that are not required for substrate recognition and catalytic activity (By similarity). Can also form heterooligomers with PLPP2 and PLPP3 (By similarity).</text>
</comment>
<comment type="subcellular location">
    <subcellularLocation>
        <location evidence="9">Cell membrane</location>
        <topology evidence="6">Multi-pass membrane protein</topology>
    </subcellularLocation>
    <subcellularLocation>
        <location evidence="2">Apical cell membrane</location>
        <topology evidence="6">Multi-pass membrane protein</topology>
    </subcellularLocation>
    <subcellularLocation>
        <location evidence="2">Membrane raft</location>
        <topology evidence="6">Multi-pass membrane protein</topology>
    </subcellularLocation>
    <subcellularLocation>
        <location evidence="5">Membrane</location>
        <location evidence="5">Caveola</location>
        <topology evidence="6">Multi-pass membrane protein</topology>
    </subcellularLocation>
</comment>
<comment type="PTM">
    <text evidence="5 9">N-glycosylated. N-linked sugars are of the complex type (PubMed:8702556). N-glycosylation is not required for the phosphatase activity (By similarity).</text>
</comment>
<comment type="similarity">
    <text evidence="11">Belongs to the PA-phosphatase related phosphoesterase family.</text>
</comment>
<protein>
    <recommendedName>
        <fullName evidence="11">Phospholipid phosphatase 1</fullName>
        <ecNumber evidence="2">3.1.3.-</ecNumber>
        <ecNumber evidence="5">3.1.3.106</ecNumber>
        <ecNumber evidence="8 9">3.1.3.4</ecNumber>
        <ecNumber evidence="5">3.6.1.75</ecNumber>
    </recommendedName>
    <alternativeName>
        <fullName>Lipid phosphate phosphohydrolase 1</fullName>
    </alternativeName>
    <alternativeName>
        <fullName>PAP2-alpha</fullName>
    </alternativeName>
    <alternativeName>
        <fullName>Phosphatidate phosphohydrolase type 2a</fullName>
    </alternativeName>
    <alternativeName>
        <fullName>Phosphatidic acid phosphatase 2a</fullName>
        <shortName>PAP-2a</shortName>
        <shortName>PAP2a</shortName>
    </alternativeName>
</protein>
<keyword id="KW-1003">Cell membrane</keyword>
<keyword id="KW-0903">Direct protein sequencing</keyword>
<keyword id="KW-0325">Glycoprotein</keyword>
<keyword id="KW-0378">Hydrolase</keyword>
<keyword id="KW-0443">Lipid metabolism</keyword>
<keyword id="KW-0472">Membrane</keyword>
<keyword id="KW-1185">Reference proteome</keyword>
<keyword id="KW-0812">Transmembrane</keyword>
<keyword id="KW-1133">Transmembrane helix</keyword>
<proteinExistence type="evidence at protein level"/>
<sequence length="285" mass="32321">MFDKTRLPYVALDVLCVLLAGLPFAILTSRHTPFQRGLFCNDESIKYPYKEDTIPYPLLGGIIIPFSIIVMIVGETLSVYFNLLHSNSFIRNNYIATIYKAIGTFLFGAAASQSLTDIAKYSIGRLRPHFLDVCDPDWSKINCSDGYIENYICRGNAQKVKEGRLSFYSGHSSFSMYCMLFVALYLQARMKGDWARLLRPTLQFGLVAVSIYVGLSRVSDYKHHWSDVLTGLIQGALVAIVVAVYVSDFFKERNSPFKERKEEDSHTTLHETPTTGNHYRNSHQP</sequence>
<organism>
    <name type="scientific">Sus scrofa</name>
    <name type="common">Pig</name>
    <dbReference type="NCBI Taxonomy" id="9823"/>
    <lineage>
        <taxon>Eukaryota</taxon>
        <taxon>Metazoa</taxon>
        <taxon>Chordata</taxon>
        <taxon>Craniata</taxon>
        <taxon>Vertebrata</taxon>
        <taxon>Euteleostomi</taxon>
        <taxon>Mammalia</taxon>
        <taxon>Eutheria</taxon>
        <taxon>Laurasiatheria</taxon>
        <taxon>Artiodactyla</taxon>
        <taxon>Suina</taxon>
        <taxon>Suidae</taxon>
        <taxon>Sus</taxon>
    </lineage>
</organism>
<dbReference type="EC" id="3.1.3.-" evidence="2"/>
<dbReference type="EC" id="3.1.3.106" evidence="5"/>
<dbReference type="EC" id="3.1.3.4" evidence="8 9"/>
<dbReference type="EC" id="3.6.1.75" evidence="5"/>
<dbReference type="EMBL" id="AEMK02000102">
    <property type="status" value="NOT_ANNOTATED_CDS"/>
    <property type="molecule type" value="Genomic_DNA"/>
</dbReference>
<dbReference type="RefSeq" id="XP_003133999.3">
    <property type="nucleotide sequence ID" value="XM_003133951.6"/>
</dbReference>
<dbReference type="FunCoup" id="P60588">
    <property type="interactions" value="466"/>
</dbReference>
<dbReference type="STRING" id="9823.ENSSSCP00000017921"/>
<dbReference type="GlyCosmos" id="P60588">
    <property type="glycosylation" value="1 site, No reported glycans"/>
</dbReference>
<dbReference type="GlyGen" id="P60588">
    <property type="glycosylation" value="1 site"/>
</dbReference>
<dbReference type="PaxDb" id="9823-ENSSSCP00000017921"/>
<dbReference type="Ensembl" id="ENSSSCT00000042472.2">
    <property type="protein sequence ID" value="ENSSSCP00000031391.1"/>
    <property type="gene ID" value="ENSSSCG00000016912.5"/>
</dbReference>
<dbReference type="Ensembl" id="ENSSSCT00015023278.1">
    <property type="protein sequence ID" value="ENSSSCP00015009070.1"/>
    <property type="gene ID" value="ENSSSCG00015017646.1"/>
</dbReference>
<dbReference type="Ensembl" id="ENSSSCT00025074606.1">
    <property type="protein sequence ID" value="ENSSSCP00025032325.1"/>
    <property type="gene ID" value="ENSSSCG00025054555.1"/>
</dbReference>
<dbReference type="Ensembl" id="ENSSSCT00030099155.1">
    <property type="protein sequence ID" value="ENSSSCP00030045630.1"/>
    <property type="gene ID" value="ENSSSCG00030070887.1"/>
</dbReference>
<dbReference type="Ensembl" id="ENSSSCT00035100779.1">
    <property type="protein sequence ID" value="ENSSSCP00035042829.1"/>
    <property type="gene ID" value="ENSSSCG00035074260.1"/>
</dbReference>
<dbReference type="Ensembl" id="ENSSSCT00040054392.1">
    <property type="protein sequence ID" value="ENSSSCP00040022622.1"/>
    <property type="gene ID" value="ENSSSCG00040040197.1"/>
</dbReference>
<dbReference type="Ensembl" id="ENSSSCT00045012611.1">
    <property type="protein sequence ID" value="ENSSSCP00045008646.1"/>
    <property type="gene ID" value="ENSSSCG00045007483.1"/>
</dbReference>
<dbReference type="Ensembl" id="ENSSSCT00050082531.1">
    <property type="protein sequence ID" value="ENSSSCP00050035419.1"/>
    <property type="gene ID" value="ENSSSCG00050060580.1"/>
</dbReference>
<dbReference type="Ensembl" id="ENSSSCT00055031058.1">
    <property type="protein sequence ID" value="ENSSSCP00055024725.1"/>
    <property type="gene ID" value="ENSSSCG00055015648.1"/>
</dbReference>
<dbReference type="Ensembl" id="ENSSSCT00060055689.1">
    <property type="protein sequence ID" value="ENSSSCP00060023781.1"/>
    <property type="gene ID" value="ENSSSCG00060041097.1"/>
</dbReference>
<dbReference type="Ensembl" id="ENSSSCT00065034385.1">
    <property type="protein sequence ID" value="ENSSSCP00065014261.1"/>
    <property type="gene ID" value="ENSSSCG00065025681.1"/>
</dbReference>
<dbReference type="Ensembl" id="ENSSSCT00070003725.1">
    <property type="protein sequence ID" value="ENSSSCP00070003088.1"/>
    <property type="gene ID" value="ENSSSCG00070001957.1"/>
</dbReference>
<dbReference type="Ensembl" id="ENSSSCT00085001714">
    <property type="protein sequence ID" value="ENSSSCP00085001247"/>
    <property type="gene ID" value="ENSSSCG00085001216"/>
</dbReference>
<dbReference type="Ensembl" id="ENSSSCT00090005020">
    <property type="protein sequence ID" value="ENSSSCP00090003120"/>
    <property type="gene ID" value="ENSSSCG00090002907"/>
</dbReference>
<dbReference type="Ensembl" id="ENSSSCT00105002785">
    <property type="protein sequence ID" value="ENSSSCP00105002057"/>
    <property type="gene ID" value="ENSSSCG00105001445"/>
</dbReference>
<dbReference type="Ensembl" id="ENSSSCT00110032137">
    <property type="protein sequence ID" value="ENSSSCP00110021760"/>
    <property type="gene ID" value="ENSSSCG00110016861"/>
</dbReference>
<dbReference type="Ensembl" id="ENSSSCT00130047495">
    <property type="protein sequence ID" value="ENSSSCP00130033353"/>
    <property type="gene ID" value="ENSSSCG00130024579"/>
</dbReference>
<dbReference type="GeneID" id="100515451"/>
<dbReference type="KEGG" id="ssc:100515451"/>
<dbReference type="CTD" id="8611"/>
<dbReference type="VGNC" id="VGNC:91570">
    <property type="gene designation" value="PLPP1"/>
</dbReference>
<dbReference type="eggNOG" id="KOG3030">
    <property type="taxonomic scope" value="Eukaryota"/>
</dbReference>
<dbReference type="GeneTree" id="ENSGT00940000156730"/>
<dbReference type="InParanoid" id="P60588"/>
<dbReference type="OrthoDB" id="8907274at2759"/>
<dbReference type="Reactome" id="R-SSC-9845614">
    <property type="pathway name" value="Sphingolipid catabolism"/>
</dbReference>
<dbReference type="UniPathway" id="UPA00085"/>
<dbReference type="Proteomes" id="UP000008227">
    <property type="component" value="Chromosome 16"/>
</dbReference>
<dbReference type="Proteomes" id="UP000314985">
    <property type="component" value="Chromosome 16"/>
</dbReference>
<dbReference type="Proteomes" id="UP000694570">
    <property type="component" value="Unplaced"/>
</dbReference>
<dbReference type="Proteomes" id="UP000694571">
    <property type="component" value="Unplaced"/>
</dbReference>
<dbReference type="Proteomes" id="UP000694720">
    <property type="component" value="Unplaced"/>
</dbReference>
<dbReference type="Proteomes" id="UP000694722">
    <property type="component" value="Unplaced"/>
</dbReference>
<dbReference type="Proteomes" id="UP000694723">
    <property type="component" value="Unplaced"/>
</dbReference>
<dbReference type="Proteomes" id="UP000694724">
    <property type="component" value="Unplaced"/>
</dbReference>
<dbReference type="Proteomes" id="UP000694725">
    <property type="component" value="Unplaced"/>
</dbReference>
<dbReference type="Proteomes" id="UP000694726">
    <property type="component" value="Unplaced"/>
</dbReference>
<dbReference type="Proteomes" id="UP000694727">
    <property type="component" value="Unplaced"/>
</dbReference>
<dbReference type="Proteomes" id="UP000694728">
    <property type="component" value="Unplaced"/>
</dbReference>
<dbReference type="Bgee" id="ENSSSCG00000016912">
    <property type="expression patterns" value="Expressed in endocardial endothelium and 44 other cell types or tissues"/>
</dbReference>
<dbReference type="ExpressionAtlas" id="P60588">
    <property type="expression patterns" value="baseline and differential"/>
</dbReference>
<dbReference type="GO" id="GO:0016324">
    <property type="term" value="C:apical plasma membrane"/>
    <property type="evidence" value="ECO:0000250"/>
    <property type="project" value="UniProtKB"/>
</dbReference>
<dbReference type="GO" id="GO:0005901">
    <property type="term" value="C:caveola"/>
    <property type="evidence" value="ECO:0000250"/>
    <property type="project" value="UniProtKB"/>
</dbReference>
<dbReference type="GO" id="GO:0016020">
    <property type="term" value="C:membrane"/>
    <property type="evidence" value="ECO:0000314"/>
    <property type="project" value="UniProtKB"/>
</dbReference>
<dbReference type="GO" id="GO:0045121">
    <property type="term" value="C:membrane raft"/>
    <property type="evidence" value="ECO:0000250"/>
    <property type="project" value="UniProtKB"/>
</dbReference>
<dbReference type="GO" id="GO:0005886">
    <property type="term" value="C:plasma membrane"/>
    <property type="evidence" value="ECO:0000314"/>
    <property type="project" value="UniProtKB"/>
</dbReference>
<dbReference type="GO" id="GO:0106235">
    <property type="term" value="F:ceramide-1-phosphate phosphatase activity"/>
    <property type="evidence" value="ECO:0000250"/>
    <property type="project" value="UniProtKB"/>
</dbReference>
<dbReference type="GO" id="GO:0000810">
    <property type="term" value="F:diacylglycerol diphosphate phosphatase activity"/>
    <property type="evidence" value="ECO:0000250"/>
    <property type="project" value="UniProtKB"/>
</dbReference>
<dbReference type="GO" id="GO:0052642">
    <property type="term" value="F:lysophosphatidic acid phosphatase activity"/>
    <property type="evidence" value="ECO:0007669"/>
    <property type="project" value="UniProtKB-EC"/>
</dbReference>
<dbReference type="GO" id="GO:0008195">
    <property type="term" value="F:phosphatidate phosphatase activity"/>
    <property type="evidence" value="ECO:0000314"/>
    <property type="project" value="UniProtKB"/>
</dbReference>
<dbReference type="GO" id="GO:0042392">
    <property type="term" value="F:sphingosine-1-phosphate phosphatase activity"/>
    <property type="evidence" value="ECO:0000250"/>
    <property type="project" value="UniProtKB"/>
</dbReference>
<dbReference type="GO" id="GO:0006672">
    <property type="term" value="P:ceramide metabolic process"/>
    <property type="evidence" value="ECO:0000250"/>
    <property type="project" value="UniProtKB"/>
</dbReference>
<dbReference type="GO" id="GO:0009395">
    <property type="term" value="P:phospholipid catabolic process"/>
    <property type="evidence" value="ECO:0000314"/>
    <property type="project" value="UniProtKB"/>
</dbReference>
<dbReference type="GO" id="GO:0046839">
    <property type="term" value="P:phospholipid dephosphorylation"/>
    <property type="evidence" value="ECO:0000314"/>
    <property type="project" value="UniProtKB"/>
</dbReference>
<dbReference type="GO" id="GO:0006644">
    <property type="term" value="P:phospholipid metabolic process"/>
    <property type="evidence" value="ECO:0000318"/>
    <property type="project" value="GO_Central"/>
</dbReference>
<dbReference type="GO" id="GO:0007165">
    <property type="term" value="P:signal transduction"/>
    <property type="evidence" value="ECO:0000250"/>
    <property type="project" value="UniProtKB"/>
</dbReference>
<dbReference type="GO" id="GO:0006670">
    <property type="term" value="P:sphingosine metabolic process"/>
    <property type="evidence" value="ECO:0000250"/>
    <property type="project" value="UniProtKB"/>
</dbReference>
<dbReference type="CDD" id="cd03384">
    <property type="entry name" value="PAP2_wunen"/>
    <property type="match status" value="1"/>
</dbReference>
<dbReference type="FunFam" id="1.20.144.10:FF:000007">
    <property type="entry name" value="phospholipid phosphatase 1 isoform X2"/>
    <property type="match status" value="1"/>
</dbReference>
<dbReference type="Gene3D" id="1.20.144.10">
    <property type="entry name" value="Phosphatidic acid phosphatase type 2/haloperoxidase"/>
    <property type="match status" value="1"/>
</dbReference>
<dbReference type="InterPro" id="IPR036938">
    <property type="entry name" value="P_Acid_Pase_2/haloperoxi_sf"/>
</dbReference>
<dbReference type="InterPro" id="IPR000326">
    <property type="entry name" value="P_Acid_Pase_2/haloperoxidase"/>
</dbReference>
<dbReference type="InterPro" id="IPR043216">
    <property type="entry name" value="PA_PP_rel"/>
</dbReference>
<dbReference type="PANTHER" id="PTHR10165">
    <property type="entry name" value="LIPID PHOSPHATE PHOSPHATASE"/>
    <property type="match status" value="1"/>
</dbReference>
<dbReference type="PANTHER" id="PTHR10165:SF26">
    <property type="entry name" value="PHOSPHOLIPID PHOSPHATASE 1"/>
    <property type="match status" value="1"/>
</dbReference>
<dbReference type="Pfam" id="PF01569">
    <property type="entry name" value="PAP2"/>
    <property type="match status" value="1"/>
</dbReference>
<dbReference type="SMART" id="SM00014">
    <property type="entry name" value="acidPPc"/>
    <property type="match status" value="1"/>
</dbReference>
<dbReference type="SUPFAM" id="SSF48317">
    <property type="entry name" value="Acid phosphatase/Vanadium-dependent haloperoxidase"/>
    <property type="match status" value="1"/>
</dbReference>